<keyword id="KW-0176">Collagen</keyword>
<keyword id="KW-1185">Reference proteome</keyword>
<keyword id="KW-0964">Secreted</keyword>
<keyword id="KW-0732">Signal</keyword>
<sequence length="289" mass="30517">MIVLLYVTSLAICASGQPRANQAKGESYSPRYICSIPGLPGPPGPPGANGSPGPHGRIGLPGRDGRDGRKGEKGEKGTAGLKGKTGPLGLAGEKGDQGETGKKGPIGPEGEKGEVGPAGPPGPKGDRGDQGDPGLPGVCRCGSIVLKSAFSVGITTSYPEERLPIIFNKVLFNEGEHYNPATGKFICAFPGIYYFSYDITLANKHLAIGLVHNGQYRIRTFDANTGNHDVASGSTVIYLQPEDEVWLEIFFNDQNGLFSDPGWADSLFSGFLLYVDTDYLDSISEDDEL</sequence>
<protein>
    <recommendedName>
        <fullName>Complement C1q tumor necrosis factor-related protein 7</fullName>
    </recommendedName>
</protein>
<gene>
    <name type="primary">C1qtnf7</name>
    <name type="synonym">Ctrp7</name>
</gene>
<organism>
    <name type="scientific">Mus musculus</name>
    <name type="common">Mouse</name>
    <dbReference type="NCBI Taxonomy" id="10090"/>
    <lineage>
        <taxon>Eukaryota</taxon>
        <taxon>Metazoa</taxon>
        <taxon>Chordata</taxon>
        <taxon>Craniata</taxon>
        <taxon>Vertebrata</taxon>
        <taxon>Euteleostomi</taxon>
        <taxon>Mammalia</taxon>
        <taxon>Eutheria</taxon>
        <taxon>Euarchontoglires</taxon>
        <taxon>Glires</taxon>
        <taxon>Rodentia</taxon>
        <taxon>Myomorpha</taxon>
        <taxon>Muroidea</taxon>
        <taxon>Muridae</taxon>
        <taxon>Murinae</taxon>
        <taxon>Mus</taxon>
        <taxon>Mus</taxon>
    </lineage>
</organism>
<name>C1QT7_MOUSE</name>
<comment type="subcellular location">
    <subcellularLocation>
        <location evidence="4">Secreted</location>
    </subcellularLocation>
</comment>
<reference key="1">
    <citation type="journal article" date="2005" name="Science">
        <title>The transcriptional landscape of the mammalian genome.</title>
        <authorList>
            <person name="Carninci P."/>
            <person name="Kasukawa T."/>
            <person name="Katayama S."/>
            <person name="Gough J."/>
            <person name="Frith M.C."/>
            <person name="Maeda N."/>
            <person name="Oyama R."/>
            <person name="Ravasi T."/>
            <person name="Lenhard B."/>
            <person name="Wells C."/>
            <person name="Kodzius R."/>
            <person name="Shimokawa K."/>
            <person name="Bajic V.B."/>
            <person name="Brenner S.E."/>
            <person name="Batalov S."/>
            <person name="Forrest A.R."/>
            <person name="Zavolan M."/>
            <person name="Davis M.J."/>
            <person name="Wilming L.G."/>
            <person name="Aidinis V."/>
            <person name="Allen J.E."/>
            <person name="Ambesi-Impiombato A."/>
            <person name="Apweiler R."/>
            <person name="Aturaliya R.N."/>
            <person name="Bailey T.L."/>
            <person name="Bansal M."/>
            <person name="Baxter L."/>
            <person name="Beisel K.W."/>
            <person name="Bersano T."/>
            <person name="Bono H."/>
            <person name="Chalk A.M."/>
            <person name="Chiu K.P."/>
            <person name="Choudhary V."/>
            <person name="Christoffels A."/>
            <person name="Clutterbuck D.R."/>
            <person name="Crowe M.L."/>
            <person name="Dalla E."/>
            <person name="Dalrymple B.P."/>
            <person name="de Bono B."/>
            <person name="Della Gatta G."/>
            <person name="di Bernardo D."/>
            <person name="Down T."/>
            <person name="Engstrom P."/>
            <person name="Fagiolini M."/>
            <person name="Faulkner G."/>
            <person name="Fletcher C.F."/>
            <person name="Fukushima T."/>
            <person name="Furuno M."/>
            <person name="Futaki S."/>
            <person name="Gariboldi M."/>
            <person name="Georgii-Hemming P."/>
            <person name="Gingeras T.R."/>
            <person name="Gojobori T."/>
            <person name="Green R.E."/>
            <person name="Gustincich S."/>
            <person name="Harbers M."/>
            <person name="Hayashi Y."/>
            <person name="Hensch T.K."/>
            <person name="Hirokawa N."/>
            <person name="Hill D."/>
            <person name="Huminiecki L."/>
            <person name="Iacono M."/>
            <person name="Ikeo K."/>
            <person name="Iwama A."/>
            <person name="Ishikawa T."/>
            <person name="Jakt M."/>
            <person name="Kanapin A."/>
            <person name="Katoh M."/>
            <person name="Kawasawa Y."/>
            <person name="Kelso J."/>
            <person name="Kitamura H."/>
            <person name="Kitano H."/>
            <person name="Kollias G."/>
            <person name="Krishnan S.P."/>
            <person name="Kruger A."/>
            <person name="Kummerfeld S.K."/>
            <person name="Kurochkin I.V."/>
            <person name="Lareau L.F."/>
            <person name="Lazarevic D."/>
            <person name="Lipovich L."/>
            <person name="Liu J."/>
            <person name="Liuni S."/>
            <person name="McWilliam S."/>
            <person name="Madan Babu M."/>
            <person name="Madera M."/>
            <person name="Marchionni L."/>
            <person name="Matsuda H."/>
            <person name="Matsuzawa S."/>
            <person name="Miki H."/>
            <person name="Mignone F."/>
            <person name="Miyake S."/>
            <person name="Morris K."/>
            <person name="Mottagui-Tabar S."/>
            <person name="Mulder N."/>
            <person name="Nakano N."/>
            <person name="Nakauchi H."/>
            <person name="Ng P."/>
            <person name="Nilsson R."/>
            <person name="Nishiguchi S."/>
            <person name="Nishikawa S."/>
            <person name="Nori F."/>
            <person name="Ohara O."/>
            <person name="Okazaki Y."/>
            <person name="Orlando V."/>
            <person name="Pang K.C."/>
            <person name="Pavan W.J."/>
            <person name="Pavesi G."/>
            <person name="Pesole G."/>
            <person name="Petrovsky N."/>
            <person name="Piazza S."/>
            <person name="Reed J."/>
            <person name="Reid J.F."/>
            <person name="Ring B.Z."/>
            <person name="Ringwald M."/>
            <person name="Rost B."/>
            <person name="Ruan Y."/>
            <person name="Salzberg S.L."/>
            <person name="Sandelin A."/>
            <person name="Schneider C."/>
            <person name="Schoenbach C."/>
            <person name="Sekiguchi K."/>
            <person name="Semple C.A."/>
            <person name="Seno S."/>
            <person name="Sessa L."/>
            <person name="Sheng Y."/>
            <person name="Shibata Y."/>
            <person name="Shimada H."/>
            <person name="Shimada K."/>
            <person name="Silva D."/>
            <person name="Sinclair B."/>
            <person name="Sperling S."/>
            <person name="Stupka E."/>
            <person name="Sugiura K."/>
            <person name="Sultana R."/>
            <person name="Takenaka Y."/>
            <person name="Taki K."/>
            <person name="Tammoja K."/>
            <person name="Tan S.L."/>
            <person name="Tang S."/>
            <person name="Taylor M.S."/>
            <person name="Tegner J."/>
            <person name="Teichmann S.A."/>
            <person name="Ueda H.R."/>
            <person name="van Nimwegen E."/>
            <person name="Verardo R."/>
            <person name="Wei C.L."/>
            <person name="Yagi K."/>
            <person name="Yamanishi H."/>
            <person name="Zabarovsky E."/>
            <person name="Zhu S."/>
            <person name="Zimmer A."/>
            <person name="Hide W."/>
            <person name="Bult C."/>
            <person name="Grimmond S.M."/>
            <person name="Teasdale R.D."/>
            <person name="Liu E.T."/>
            <person name="Brusic V."/>
            <person name="Quackenbush J."/>
            <person name="Wahlestedt C."/>
            <person name="Mattick J.S."/>
            <person name="Hume D.A."/>
            <person name="Kai C."/>
            <person name="Sasaki D."/>
            <person name="Tomaru Y."/>
            <person name="Fukuda S."/>
            <person name="Kanamori-Katayama M."/>
            <person name="Suzuki M."/>
            <person name="Aoki J."/>
            <person name="Arakawa T."/>
            <person name="Iida J."/>
            <person name="Imamura K."/>
            <person name="Itoh M."/>
            <person name="Kato T."/>
            <person name="Kawaji H."/>
            <person name="Kawagashira N."/>
            <person name="Kawashima T."/>
            <person name="Kojima M."/>
            <person name="Kondo S."/>
            <person name="Konno H."/>
            <person name="Nakano K."/>
            <person name="Ninomiya N."/>
            <person name="Nishio T."/>
            <person name="Okada M."/>
            <person name="Plessy C."/>
            <person name="Shibata K."/>
            <person name="Shiraki T."/>
            <person name="Suzuki S."/>
            <person name="Tagami M."/>
            <person name="Waki K."/>
            <person name="Watahiki A."/>
            <person name="Okamura-Oho Y."/>
            <person name="Suzuki H."/>
            <person name="Kawai J."/>
            <person name="Hayashizaki Y."/>
        </authorList>
    </citation>
    <scope>NUCLEOTIDE SEQUENCE [LARGE SCALE MRNA]</scope>
    <source>
        <strain>C57BL/6J</strain>
        <tissue>Lung</tissue>
    </source>
</reference>
<reference key="2">
    <citation type="journal article" date="2004" name="Genome Res.">
        <title>The status, quality, and expansion of the NIH full-length cDNA project: the Mammalian Gene Collection (MGC).</title>
        <authorList>
            <consortium name="The MGC Project Team"/>
        </authorList>
    </citation>
    <scope>NUCLEOTIDE SEQUENCE [LARGE SCALE MRNA]</scope>
    <source>
        <strain>C57BL/6J</strain>
        <tissue>Mammary gland</tissue>
    </source>
</reference>
<proteinExistence type="evidence at transcript level"/>
<dbReference type="EMBL" id="AK078818">
    <property type="protein sequence ID" value="BAC37409.1"/>
    <property type="molecule type" value="mRNA"/>
</dbReference>
<dbReference type="EMBL" id="BC038308">
    <property type="protein sequence ID" value="AAH38308.1"/>
    <property type="molecule type" value="mRNA"/>
</dbReference>
<dbReference type="CCDS" id="CCDS19262.1"/>
<dbReference type="RefSeq" id="NP_001128644.1">
    <property type="nucleotide sequence ID" value="NM_001135172.1"/>
</dbReference>
<dbReference type="RefSeq" id="NP_780634.2">
    <property type="nucleotide sequence ID" value="NM_175425.4"/>
</dbReference>
<dbReference type="RefSeq" id="XP_006503728.1">
    <property type="nucleotide sequence ID" value="XM_006503665.5"/>
</dbReference>
<dbReference type="SMR" id="Q8BVD7"/>
<dbReference type="FunCoup" id="Q8BVD7">
    <property type="interactions" value="518"/>
</dbReference>
<dbReference type="STRING" id="10090.ENSMUSP00000076206"/>
<dbReference type="iPTMnet" id="Q8BVD7"/>
<dbReference type="PhosphoSitePlus" id="Q8BVD7"/>
<dbReference type="PaxDb" id="10090-ENSMUSP00000113520"/>
<dbReference type="ProteomicsDB" id="281708"/>
<dbReference type="Antibodypedia" id="3361">
    <property type="antibodies" value="220 antibodies from 29 providers"/>
</dbReference>
<dbReference type="DNASU" id="109323"/>
<dbReference type="Ensembl" id="ENSMUST00000121872.3">
    <property type="protein sequence ID" value="ENSMUSP00000113520.2"/>
    <property type="gene ID" value="ENSMUSG00000061535.12"/>
</dbReference>
<dbReference type="GeneID" id="109323"/>
<dbReference type="KEGG" id="mmu:109323"/>
<dbReference type="UCSC" id="uc008xho.2">
    <property type="organism name" value="mouse"/>
</dbReference>
<dbReference type="AGR" id="MGI:1925911"/>
<dbReference type="CTD" id="114905"/>
<dbReference type="MGI" id="MGI:1925911">
    <property type="gene designation" value="C1qtnf7"/>
</dbReference>
<dbReference type="VEuPathDB" id="HostDB:ENSMUSG00000061535"/>
<dbReference type="eggNOG" id="ENOG502R68F">
    <property type="taxonomic scope" value="Eukaryota"/>
</dbReference>
<dbReference type="GeneTree" id="ENSGT00940000159588"/>
<dbReference type="HOGENOM" id="CLU_001074_0_3_1"/>
<dbReference type="InParanoid" id="Q8BVD7"/>
<dbReference type="OrthoDB" id="9889709at2759"/>
<dbReference type="PhylomeDB" id="Q8BVD7"/>
<dbReference type="TreeFam" id="TF329591"/>
<dbReference type="BioGRID-ORCS" id="109323">
    <property type="hits" value="4 hits in 77 CRISPR screens"/>
</dbReference>
<dbReference type="ChiTaRS" id="C1qtnf7">
    <property type="organism name" value="mouse"/>
</dbReference>
<dbReference type="PRO" id="PR:Q8BVD7"/>
<dbReference type="Proteomes" id="UP000000589">
    <property type="component" value="Chromosome 5"/>
</dbReference>
<dbReference type="RNAct" id="Q8BVD7">
    <property type="molecule type" value="protein"/>
</dbReference>
<dbReference type="Bgee" id="ENSMUSG00000061535">
    <property type="expression patterns" value="Expressed in indifferent gonad and 120 other cell types or tissues"/>
</dbReference>
<dbReference type="ExpressionAtlas" id="Q8BVD7">
    <property type="expression patterns" value="baseline and differential"/>
</dbReference>
<dbReference type="GO" id="GO:0005581">
    <property type="term" value="C:collagen trimer"/>
    <property type="evidence" value="ECO:0007669"/>
    <property type="project" value="UniProtKB-KW"/>
</dbReference>
<dbReference type="GO" id="GO:0005615">
    <property type="term" value="C:extracellular space"/>
    <property type="evidence" value="ECO:0000314"/>
    <property type="project" value="MGI"/>
</dbReference>
<dbReference type="GO" id="GO:0042802">
    <property type="term" value="F:identical protein binding"/>
    <property type="evidence" value="ECO:0000353"/>
    <property type="project" value="MGI"/>
</dbReference>
<dbReference type="FunFam" id="2.60.120.40:FF:000001">
    <property type="entry name" value="Complement C1q B chain"/>
    <property type="match status" value="1"/>
</dbReference>
<dbReference type="Gene3D" id="2.60.120.40">
    <property type="match status" value="1"/>
</dbReference>
<dbReference type="InterPro" id="IPR001073">
    <property type="entry name" value="C1q_dom"/>
</dbReference>
<dbReference type="InterPro" id="IPR008160">
    <property type="entry name" value="Collagen"/>
</dbReference>
<dbReference type="InterPro" id="IPR050392">
    <property type="entry name" value="Collagen/C1q_domain"/>
</dbReference>
<dbReference type="InterPro" id="IPR008983">
    <property type="entry name" value="Tumour_necrosis_fac-like_dom"/>
</dbReference>
<dbReference type="PANTHER" id="PTHR15427:SF52">
    <property type="entry name" value="C1Q DOMAIN-CONTAINING PROTEIN"/>
    <property type="match status" value="1"/>
</dbReference>
<dbReference type="PANTHER" id="PTHR15427">
    <property type="entry name" value="EMILIN ELASTIN MICROFIBRIL INTERFACE-LOCATED PROTEIN ELASTIN MICROFIBRIL INTERFACER"/>
    <property type="match status" value="1"/>
</dbReference>
<dbReference type="Pfam" id="PF00386">
    <property type="entry name" value="C1q"/>
    <property type="match status" value="1"/>
</dbReference>
<dbReference type="Pfam" id="PF01391">
    <property type="entry name" value="Collagen"/>
    <property type="match status" value="2"/>
</dbReference>
<dbReference type="PRINTS" id="PR00007">
    <property type="entry name" value="COMPLEMNTC1Q"/>
</dbReference>
<dbReference type="SMART" id="SM00110">
    <property type="entry name" value="C1Q"/>
    <property type="match status" value="1"/>
</dbReference>
<dbReference type="SUPFAM" id="SSF49842">
    <property type="entry name" value="TNF-like"/>
    <property type="match status" value="1"/>
</dbReference>
<dbReference type="PROSITE" id="PS50871">
    <property type="entry name" value="C1Q"/>
    <property type="match status" value="1"/>
</dbReference>
<feature type="signal peptide" evidence="1">
    <location>
        <begin position="1"/>
        <end position="16"/>
    </location>
</feature>
<feature type="chain" id="PRO_0000003540" description="Complement C1q tumor necrosis factor-related protein 7">
    <location>
        <begin position="17"/>
        <end position="289"/>
    </location>
</feature>
<feature type="domain" description="Collagen-like">
    <location>
        <begin position="38"/>
        <end position="139"/>
    </location>
</feature>
<feature type="domain" description="C1q" evidence="2">
    <location>
        <begin position="143"/>
        <end position="279"/>
    </location>
</feature>
<feature type="region of interest" description="Disordered" evidence="3">
    <location>
        <begin position="36"/>
        <end position="134"/>
    </location>
</feature>
<feature type="compositionally biased region" description="Low complexity" evidence="3">
    <location>
        <begin position="48"/>
        <end position="61"/>
    </location>
</feature>
<feature type="compositionally biased region" description="Basic and acidic residues" evidence="3">
    <location>
        <begin position="63"/>
        <end position="76"/>
    </location>
</feature>
<feature type="compositionally biased region" description="Low complexity" evidence="3">
    <location>
        <begin position="78"/>
        <end position="91"/>
    </location>
</feature>
<feature type="compositionally biased region" description="Basic and acidic residues" evidence="3">
    <location>
        <begin position="93"/>
        <end position="102"/>
    </location>
</feature>
<feature type="sequence conflict" description="In Ref. 1; BAC37409." evidence="4" ref="1">
    <original>A</original>
    <variation>P</variation>
    <location>
        <position position="20"/>
    </location>
</feature>
<feature type="sequence conflict" description="In Ref. 1; BAC37409." evidence="4" ref="1">
    <original>Y</original>
    <variation>C</variation>
    <location>
        <position position="193"/>
    </location>
</feature>
<accession>Q8BVD7</accession>
<accession>Q8CHX9</accession>
<evidence type="ECO:0000255" key="1"/>
<evidence type="ECO:0000255" key="2">
    <source>
        <dbReference type="PROSITE-ProRule" id="PRU00368"/>
    </source>
</evidence>
<evidence type="ECO:0000256" key="3">
    <source>
        <dbReference type="SAM" id="MobiDB-lite"/>
    </source>
</evidence>
<evidence type="ECO:0000305" key="4"/>